<feature type="chain" id="PRO_0000172310" description="Large ribosomal subunit protein bL32">
    <location>
        <begin position="1"/>
        <end position="61"/>
    </location>
</feature>
<feature type="region of interest" description="Disordered" evidence="2">
    <location>
        <begin position="1"/>
        <end position="47"/>
    </location>
</feature>
<feature type="compositionally biased region" description="Basic residues" evidence="2">
    <location>
        <begin position="1"/>
        <end position="16"/>
    </location>
</feature>
<feature type="compositionally biased region" description="Basic and acidic residues" evidence="2">
    <location>
        <begin position="29"/>
        <end position="38"/>
    </location>
</feature>
<reference key="1">
    <citation type="journal article" date="2004" name="Science">
        <title>A predator unmasked: life cycle of Bdellovibrio bacteriovorus from a genomic perspective.</title>
        <authorList>
            <person name="Rendulic S."/>
            <person name="Jagtap P."/>
            <person name="Rosinus A."/>
            <person name="Eppinger M."/>
            <person name="Baar C."/>
            <person name="Lanz C."/>
            <person name="Keller H."/>
            <person name="Lambert C."/>
            <person name="Evans K.J."/>
            <person name="Goesmann A."/>
            <person name="Meyer F."/>
            <person name="Sockett R.E."/>
            <person name="Schuster S.C."/>
        </authorList>
    </citation>
    <scope>NUCLEOTIDE SEQUENCE [LARGE SCALE GENOMIC DNA]</scope>
    <source>
        <strain>ATCC 15356 / DSM 50701 / NCIMB 9529 / HD100</strain>
    </source>
</reference>
<sequence length="61" mass="6728">MPTPKKKTSRSKRDMRRSHDGLTAPAIAVEKKTGELVRPHRAHKGADGALYYKGKQISAAK</sequence>
<name>RL32_BDEBA</name>
<comment type="similarity">
    <text evidence="1">Belongs to the bacterial ribosomal protein bL32 family.</text>
</comment>
<keyword id="KW-1185">Reference proteome</keyword>
<keyword id="KW-0687">Ribonucleoprotein</keyword>
<keyword id="KW-0689">Ribosomal protein</keyword>
<proteinExistence type="inferred from homology"/>
<organism>
    <name type="scientific">Bdellovibrio bacteriovorus (strain ATCC 15356 / DSM 50701 / NCIMB 9529 / HD100)</name>
    <dbReference type="NCBI Taxonomy" id="264462"/>
    <lineage>
        <taxon>Bacteria</taxon>
        <taxon>Pseudomonadati</taxon>
        <taxon>Bdellovibrionota</taxon>
        <taxon>Bdellovibrionia</taxon>
        <taxon>Bdellovibrionales</taxon>
        <taxon>Pseudobdellovibrionaceae</taxon>
        <taxon>Bdellovibrio</taxon>
    </lineage>
</organism>
<protein>
    <recommendedName>
        <fullName evidence="1">Large ribosomal subunit protein bL32</fullName>
    </recommendedName>
    <alternativeName>
        <fullName evidence="3">50S ribosomal protein L32</fullName>
    </alternativeName>
</protein>
<dbReference type="EMBL" id="BX842651">
    <property type="protein sequence ID" value="CAE79863.1"/>
    <property type="molecule type" value="Genomic_DNA"/>
</dbReference>
<dbReference type="RefSeq" id="WP_011164465.1">
    <property type="nucleotide sequence ID" value="NC_005363.1"/>
</dbReference>
<dbReference type="SMR" id="Q6MLJ4"/>
<dbReference type="STRING" id="264462.Bd2015"/>
<dbReference type="GeneID" id="93012964"/>
<dbReference type="KEGG" id="bba:Bd2015"/>
<dbReference type="eggNOG" id="COG0333">
    <property type="taxonomic scope" value="Bacteria"/>
</dbReference>
<dbReference type="HOGENOM" id="CLU_129084_2_1_7"/>
<dbReference type="Proteomes" id="UP000008080">
    <property type="component" value="Chromosome"/>
</dbReference>
<dbReference type="GO" id="GO:0015934">
    <property type="term" value="C:large ribosomal subunit"/>
    <property type="evidence" value="ECO:0007669"/>
    <property type="project" value="InterPro"/>
</dbReference>
<dbReference type="GO" id="GO:0003735">
    <property type="term" value="F:structural constituent of ribosome"/>
    <property type="evidence" value="ECO:0007669"/>
    <property type="project" value="InterPro"/>
</dbReference>
<dbReference type="GO" id="GO:0006412">
    <property type="term" value="P:translation"/>
    <property type="evidence" value="ECO:0007669"/>
    <property type="project" value="UniProtKB-UniRule"/>
</dbReference>
<dbReference type="Gene3D" id="1.20.5.640">
    <property type="entry name" value="Single helix bin"/>
    <property type="match status" value="1"/>
</dbReference>
<dbReference type="HAMAP" id="MF_00340">
    <property type="entry name" value="Ribosomal_bL32"/>
    <property type="match status" value="1"/>
</dbReference>
<dbReference type="InterPro" id="IPR002677">
    <property type="entry name" value="Ribosomal_bL32"/>
</dbReference>
<dbReference type="InterPro" id="IPR044957">
    <property type="entry name" value="Ribosomal_bL32_bact"/>
</dbReference>
<dbReference type="InterPro" id="IPR011332">
    <property type="entry name" value="Ribosomal_zn-bd"/>
</dbReference>
<dbReference type="NCBIfam" id="TIGR01031">
    <property type="entry name" value="rpmF_bact"/>
    <property type="match status" value="1"/>
</dbReference>
<dbReference type="PANTHER" id="PTHR35534">
    <property type="entry name" value="50S RIBOSOMAL PROTEIN L32"/>
    <property type="match status" value="1"/>
</dbReference>
<dbReference type="PANTHER" id="PTHR35534:SF1">
    <property type="entry name" value="LARGE RIBOSOMAL SUBUNIT PROTEIN BL32"/>
    <property type="match status" value="1"/>
</dbReference>
<dbReference type="Pfam" id="PF01783">
    <property type="entry name" value="Ribosomal_L32p"/>
    <property type="match status" value="1"/>
</dbReference>
<dbReference type="SUPFAM" id="SSF57829">
    <property type="entry name" value="Zn-binding ribosomal proteins"/>
    <property type="match status" value="1"/>
</dbReference>
<evidence type="ECO:0000255" key="1">
    <source>
        <dbReference type="HAMAP-Rule" id="MF_00340"/>
    </source>
</evidence>
<evidence type="ECO:0000256" key="2">
    <source>
        <dbReference type="SAM" id="MobiDB-lite"/>
    </source>
</evidence>
<evidence type="ECO:0000305" key="3"/>
<gene>
    <name evidence="1" type="primary">rpmF</name>
    <name evidence="1" type="synonym">rpl32</name>
    <name type="ordered locus">Bd2015</name>
</gene>
<accession>Q6MLJ4</accession>